<proteinExistence type="evidence at transcript level"/>
<sequence length="265" mass="29510">MTTIKVVKICGAMESRGLNPLDHLPPPASSNKPLTPFSITDILSKPTVKRFHRIHRLPASDRVRQSITVSRQTLITQASPLCALQELASKTFKGLELGVLQAAEGKDGLKLFGQRDSPKKRRKSRTAFTNHQLYELEKRFLHQKYLSPADRDQIAHQLGLTNAQVITWFQNRRAKLKRDLEEMKADVESVRSTGLVPLDKLAKLADLERCAAAGATGNPGPQCSPRLGHEYKTVHKLCLSPMSSLSDHTSQDCSEDEEVEIDVDV</sequence>
<feature type="chain" id="PRO_0000451739" description="Transcription factor LBX1b">
    <location>
        <begin position="1"/>
        <end position="265"/>
    </location>
</feature>
<feature type="DNA-binding region" description="Homeobox" evidence="1">
    <location>
        <begin position="121"/>
        <end position="180"/>
    </location>
</feature>
<reference evidence="6" key="1">
    <citation type="journal article" date="2013" name="Nature">
        <title>The zebrafish reference genome sequence and its relationship to the human genome.</title>
        <authorList>
            <person name="Howe K."/>
            <person name="Clark M.D."/>
            <person name="Torroja C.F."/>
            <person name="Torrance J."/>
            <person name="Berthelot C."/>
            <person name="Muffato M."/>
            <person name="Collins J.E."/>
            <person name="Humphray S."/>
            <person name="McLaren K."/>
            <person name="Matthews L."/>
            <person name="McLaren S."/>
            <person name="Sealy I."/>
            <person name="Caccamo M."/>
            <person name="Churcher C."/>
            <person name="Scott C."/>
            <person name="Barrett J.C."/>
            <person name="Koch R."/>
            <person name="Rauch G.J."/>
            <person name="White S."/>
            <person name="Chow W."/>
            <person name="Kilian B."/>
            <person name="Quintais L.T."/>
            <person name="Guerra-Assuncao J.A."/>
            <person name="Zhou Y."/>
            <person name="Gu Y."/>
            <person name="Yen J."/>
            <person name="Vogel J.H."/>
            <person name="Eyre T."/>
            <person name="Redmond S."/>
            <person name="Banerjee R."/>
            <person name="Chi J."/>
            <person name="Fu B."/>
            <person name="Langley E."/>
            <person name="Maguire S.F."/>
            <person name="Laird G.K."/>
            <person name="Lloyd D."/>
            <person name="Kenyon E."/>
            <person name="Donaldson S."/>
            <person name="Sehra H."/>
            <person name="Almeida-King J."/>
            <person name="Loveland J."/>
            <person name="Trevanion S."/>
            <person name="Jones M."/>
            <person name="Quail M."/>
            <person name="Willey D."/>
            <person name="Hunt A."/>
            <person name="Burton J."/>
            <person name="Sims S."/>
            <person name="McLay K."/>
            <person name="Plumb B."/>
            <person name="Davis J."/>
            <person name="Clee C."/>
            <person name="Oliver K."/>
            <person name="Clark R."/>
            <person name="Riddle C."/>
            <person name="Elliot D."/>
            <person name="Threadgold G."/>
            <person name="Harden G."/>
            <person name="Ware D."/>
            <person name="Begum S."/>
            <person name="Mortimore B."/>
            <person name="Kerry G."/>
            <person name="Heath P."/>
            <person name="Phillimore B."/>
            <person name="Tracey A."/>
            <person name="Corby N."/>
            <person name="Dunn M."/>
            <person name="Johnson C."/>
            <person name="Wood J."/>
            <person name="Clark S."/>
            <person name="Pelan S."/>
            <person name="Griffiths G."/>
            <person name="Smith M."/>
            <person name="Glithero R."/>
            <person name="Howden P."/>
            <person name="Barker N."/>
            <person name="Lloyd C."/>
            <person name="Stevens C."/>
            <person name="Harley J."/>
            <person name="Holt K."/>
            <person name="Panagiotidis G."/>
            <person name="Lovell J."/>
            <person name="Beasley H."/>
            <person name="Henderson C."/>
            <person name="Gordon D."/>
            <person name="Auger K."/>
            <person name="Wright D."/>
            <person name="Collins J."/>
            <person name="Raisen C."/>
            <person name="Dyer L."/>
            <person name="Leung K."/>
            <person name="Robertson L."/>
            <person name="Ambridge K."/>
            <person name="Leongamornlert D."/>
            <person name="McGuire S."/>
            <person name="Gilderthorp R."/>
            <person name="Griffiths C."/>
            <person name="Manthravadi D."/>
            <person name="Nichol S."/>
            <person name="Barker G."/>
            <person name="Whitehead S."/>
            <person name="Kay M."/>
            <person name="Brown J."/>
            <person name="Murnane C."/>
            <person name="Gray E."/>
            <person name="Humphries M."/>
            <person name="Sycamore N."/>
            <person name="Barker D."/>
            <person name="Saunders D."/>
            <person name="Wallis J."/>
            <person name="Babbage A."/>
            <person name="Hammond S."/>
            <person name="Mashreghi-Mohammadi M."/>
            <person name="Barr L."/>
            <person name="Martin S."/>
            <person name="Wray P."/>
            <person name="Ellington A."/>
            <person name="Matthews N."/>
            <person name="Ellwood M."/>
            <person name="Woodmansey R."/>
            <person name="Clark G."/>
            <person name="Cooper J."/>
            <person name="Tromans A."/>
            <person name="Grafham D."/>
            <person name="Skuce C."/>
            <person name="Pandian R."/>
            <person name="Andrews R."/>
            <person name="Harrison E."/>
            <person name="Kimberley A."/>
            <person name="Garnett J."/>
            <person name="Fosker N."/>
            <person name="Hall R."/>
            <person name="Garner P."/>
            <person name="Kelly D."/>
            <person name="Bird C."/>
            <person name="Palmer S."/>
            <person name="Gehring I."/>
            <person name="Berger A."/>
            <person name="Dooley C.M."/>
            <person name="Ersan-Urun Z."/>
            <person name="Eser C."/>
            <person name="Geiger H."/>
            <person name="Geisler M."/>
            <person name="Karotki L."/>
            <person name="Kirn A."/>
            <person name="Konantz J."/>
            <person name="Konantz M."/>
            <person name="Oberlander M."/>
            <person name="Rudolph-Geiger S."/>
            <person name="Teucke M."/>
            <person name="Lanz C."/>
            <person name="Raddatz G."/>
            <person name="Osoegawa K."/>
            <person name="Zhu B."/>
            <person name="Rapp A."/>
            <person name="Widaa S."/>
            <person name="Langford C."/>
            <person name="Yang F."/>
            <person name="Schuster S.C."/>
            <person name="Carter N.P."/>
            <person name="Harrow J."/>
            <person name="Ning Z."/>
            <person name="Herrero J."/>
            <person name="Searle S.M."/>
            <person name="Enright A."/>
            <person name="Geisler R."/>
            <person name="Plasterk R.H."/>
            <person name="Lee C."/>
            <person name="Westerfield M."/>
            <person name="de Jong P.J."/>
            <person name="Zon L.I."/>
            <person name="Postlethwait J.H."/>
            <person name="Nusslein-Volhard C."/>
            <person name="Hubbard T.J."/>
            <person name="Roest Crollius H."/>
            <person name="Rogers J."/>
            <person name="Stemple D.L."/>
        </authorList>
    </citation>
    <scope>NUCLEOTIDE SEQUENCE [LARGE SCALE GENOMIC DNA]</scope>
    <source>
        <strain evidence="6">Tuebingen</strain>
    </source>
</reference>
<reference evidence="5" key="2">
    <citation type="journal article" date="2009" name="BMC Dev. Biol.">
        <title>Lbx2 regulates formation of myofibrils.</title>
        <authorList>
            <person name="Ochi H."/>
            <person name="Westerfield M."/>
        </authorList>
    </citation>
    <scope>FUNCTION</scope>
    <scope>DEVELOPMENTAL STAGE</scope>
    <scope>DISRUPTION PHENOTYPE</scope>
</reference>
<comment type="function">
    <text evidence="3">Transcription factor required for the development of hypaxial muscles.</text>
</comment>
<comment type="subcellular location">
    <subcellularLocation>
        <location evidence="1 2">Nucleus</location>
    </subcellularLocation>
</comment>
<comment type="developmental stage">
    <text evidence="3">First expressed at the dorsal intermediate region of the neural tube at the 5-somite stage, expression is extended along the rostral caudal axis by the late stages of segmentation (PubMed:19216761). Expressed at the presumptive fin bud at 24 hours post-fertilization (hpf) and then at the fin bud at 48 hpf (PubMed:19216761).</text>
</comment>
<comment type="disruption phenotype">
    <text evidence="3">Morpholino knockdown results in decreased myod1 expression in the fin bud of embryos.</text>
</comment>
<evidence type="ECO:0000255" key="1">
    <source>
        <dbReference type="PROSITE-ProRule" id="PRU00108"/>
    </source>
</evidence>
<evidence type="ECO:0000255" key="2">
    <source>
        <dbReference type="RuleBase" id="RU000682"/>
    </source>
</evidence>
<evidence type="ECO:0000269" key="3">
    <source>
    </source>
</evidence>
<evidence type="ECO:0000303" key="4">
    <source>
    </source>
</evidence>
<evidence type="ECO:0000305" key="5"/>
<evidence type="ECO:0000312" key="6">
    <source>
        <dbReference type="Proteomes" id="UP000000437"/>
    </source>
</evidence>
<evidence type="ECO:0000312" key="7">
    <source>
        <dbReference type="ZFIN" id="ZDB-GENE-050309-27"/>
    </source>
</evidence>
<gene>
    <name evidence="7" type="primary">lbx1b</name>
</gene>
<accession>E7FDX5</accession>
<accession>F1QS21</accession>
<dbReference type="EMBL" id="CR855357">
    <property type="status" value="NOT_ANNOTATED_CDS"/>
    <property type="molecule type" value="Genomic_DNA"/>
</dbReference>
<dbReference type="EMBL" id="CT573247">
    <property type="status" value="NOT_ANNOTATED_CDS"/>
    <property type="molecule type" value="Genomic_DNA"/>
</dbReference>
<dbReference type="RefSeq" id="NP_001156784.1">
    <property type="nucleotide sequence ID" value="NM_001163312.1"/>
</dbReference>
<dbReference type="SMR" id="E7FDX5"/>
<dbReference type="FunCoup" id="E7FDX5">
    <property type="interactions" value="2"/>
</dbReference>
<dbReference type="STRING" id="7955.ENSDARP00000014246"/>
<dbReference type="PaxDb" id="7955-ENSDARP00000014246"/>
<dbReference type="Ensembl" id="ENSDART00000007770">
    <property type="protein sequence ID" value="ENSDARP00000014246"/>
    <property type="gene ID" value="ENSDARG00000018611"/>
</dbReference>
<dbReference type="GeneID" id="793810"/>
<dbReference type="KEGG" id="dre:793810"/>
<dbReference type="AGR" id="ZFIN:ZDB-GENE-050309-27"/>
<dbReference type="CTD" id="793810"/>
<dbReference type="ZFIN" id="ZDB-GENE-050309-27">
    <property type="gene designation" value="lbx1b"/>
</dbReference>
<dbReference type="eggNOG" id="KOG0488">
    <property type="taxonomic scope" value="Eukaryota"/>
</dbReference>
<dbReference type="HOGENOM" id="CLU_086390_0_0_1"/>
<dbReference type="InParanoid" id="E7FDX5"/>
<dbReference type="OMA" id="HEREITH"/>
<dbReference type="OrthoDB" id="6159439at2759"/>
<dbReference type="PhylomeDB" id="E7FDX5"/>
<dbReference type="TreeFam" id="TF325047"/>
<dbReference type="PRO" id="PR:E7FDX5"/>
<dbReference type="Proteomes" id="UP000000437">
    <property type="component" value="Chromosome 1"/>
</dbReference>
<dbReference type="Bgee" id="ENSDARG00000018611">
    <property type="expression patterns" value="Expressed in hindbrain and 18 other cell types or tissues"/>
</dbReference>
<dbReference type="GO" id="GO:0005634">
    <property type="term" value="C:nucleus"/>
    <property type="evidence" value="ECO:0000318"/>
    <property type="project" value="GO_Central"/>
</dbReference>
<dbReference type="GO" id="GO:0000981">
    <property type="term" value="F:DNA-binding transcription factor activity, RNA polymerase II-specific"/>
    <property type="evidence" value="ECO:0000318"/>
    <property type="project" value="GO_Central"/>
</dbReference>
<dbReference type="GO" id="GO:1990837">
    <property type="term" value="F:sequence-specific double-stranded DNA binding"/>
    <property type="evidence" value="ECO:0000318"/>
    <property type="project" value="GO_Central"/>
</dbReference>
<dbReference type="GO" id="GO:0060026">
    <property type="term" value="P:convergent extension"/>
    <property type="evidence" value="ECO:0000315"/>
    <property type="project" value="ZFIN"/>
</dbReference>
<dbReference type="GO" id="GO:0042692">
    <property type="term" value="P:muscle cell differentiation"/>
    <property type="evidence" value="ECO:0000315"/>
    <property type="project" value="UniProtKB"/>
</dbReference>
<dbReference type="GO" id="GO:0006357">
    <property type="term" value="P:regulation of transcription by RNA polymerase II"/>
    <property type="evidence" value="ECO:0000318"/>
    <property type="project" value="GO_Central"/>
</dbReference>
<dbReference type="CDD" id="cd00086">
    <property type="entry name" value="homeodomain"/>
    <property type="match status" value="1"/>
</dbReference>
<dbReference type="FunFam" id="1.10.10.60:FF:000098">
    <property type="entry name" value="Transcription factor LBX1"/>
    <property type="match status" value="1"/>
</dbReference>
<dbReference type="Gene3D" id="1.10.10.60">
    <property type="entry name" value="Homeodomain-like"/>
    <property type="match status" value="1"/>
</dbReference>
<dbReference type="InterPro" id="IPR001356">
    <property type="entry name" value="HD"/>
</dbReference>
<dbReference type="InterPro" id="IPR017970">
    <property type="entry name" value="Homeobox_CS"/>
</dbReference>
<dbReference type="InterPro" id="IPR009057">
    <property type="entry name" value="Homeodomain-like_sf"/>
</dbReference>
<dbReference type="InterPro" id="IPR000047">
    <property type="entry name" value="HTH_motif"/>
</dbReference>
<dbReference type="InterPro" id="IPR051892">
    <property type="entry name" value="LBX_TF"/>
</dbReference>
<dbReference type="PANTHER" id="PTHR24336">
    <property type="entry name" value="TRANSCRIPTION FACTOR LBX"/>
    <property type="match status" value="1"/>
</dbReference>
<dbReference type="PANTHER" id="PTHR24336:SF9">
    <property type="entry name" value="TRANSCRIPTION FACTOR LBX1"/>
    <property type="match status" value="1"/>
</dbReference>
<dbReference type="Pfam" id="PF00046">
    <property type="entry name" value="Homeodomain"/>
    <property type="match status" value="1"/>
</dbReference>
<dbReference type="PRINTS" id="PR00031">
    <property type="entry name" value="HTHREPRESSR"/>
</dbReference>
<dbReference type="SMART" id="SM00389">
    <property type="entry name" value="HOX"/>
    <property type="match status" value="1"/>
</dbReference>
<dbReference type="SUPFAM" id="SSF46689">
    <property type="entry name" value="Homeodomain-like"/>
    <property type="match status" value="1"/>
</dbReference>
<dbReference type="PROSITE" id="PS00027">
    <property type="entry name" value="HOMEOBOX_1"/>
    <property type="match status" value="1"/>
</dbReference>
<dbReference type="PROSITE" id="PS50071">
    <property type="entry name" value="HOMEOBOX_2"/>
    <property type="match status" value="1"/>
</dbReference>
<protein>
    <recommendedName>
        <fullName evidence="4">Transcription factor LBX1b</fullName>
    </recommendedName>
    <alternativeName>
        <fullName evidence="7">Ladybird homeobox 1b</fullName>
    </alternativeName>
</protein>
<name>LBX1B_DANRE</name>
<organism evidence="6">
    <name type="scientific">Danio rerio</name>
    <name type="common">Zebrafish</name>
    <name type="synonym">Brachydanio rerio</name>
    <dbReference type="NCBI Taxonomy" id="7955"/>
    <lineage>
        <taxon>Eukaryota</taxon>
        <taxon>Metazoa</taxon>
        <taxon>Chordata</taxon>
        <taxon>Craniata</taxon>
        <taxon>Vertebrata</taxon>
        <taxon>Euteleostomi</taxon>
        <taxon>Actinopterygii</taxon>
        <taxon>Neopterygii</taxon>
        <taxon>Teleostei</taxon>
        <taxon>Ostariophysi</taxon>
        <taxon>Cypriniformes</taxon>
        <taxon>Danionidae</taxon>
        <taxon>Danioninae</taxon>
        <taxon>Danio</taxon>
    </lineage>
</organism>
<keyword id="KW-0217">Developmental protein</keyword>
<keyword id="KW-0238">DNA-binding</keyword>
<keyword id="KW-0371">Homeobox</keyword>
<keyword id="KW-0539">Nucleus</keyword>
<keyword id="KW-1185">Reference proteome</keyword>